<comment type="function">
    <text evidence="2">Secreted effector that completely suppresses the host cell death induced by cell death-inducing proteins.</text>
</comment>
<comment type="subcellular location">
    <subcellularLocation>
        <location evidence="2">Secreted</location>
    </subcellularLocation>
    <subcellularLocation>
        <location evidence="2">Host nucleus</location>
    </subcellularLocation>
    <text evidence="2">Localizes to bulk/chunk-like structures within the nucleus.</text>
</comment>
<comment type="domain">
    <text evidence="5">The RxLR-dEER motif acts to carry the protein into the host cell cytoplasm through binding to cell surface phosphatidylinositol-3-phosphate.</text>
</comment>
<comment type="similarity">
    <text evidence="4">Belongs to the RxLR effector family.</text>
</comment>
<proteinExistence type="evidence at transcript level"/>
<reference key="1">
    <citation type="journal article" date="2018" name="Front. Plant Sci.">
        <title>In planta functional analysis and subcellular localization of the oomycete pathogen Plasmopara viticola candidate RXLR effector repertoire.</title>
        <authorList>
            <person name="Liu Y."/>
            <person name="Lan X."/>
            <person name="Song S."/>
            <person name="Yin L."/>
            <person name="Dry I.B."/>
            <person name="Qu J."/>
            <person name="Xiang J."/>
            <person name="Lu J."/>
        </authorList>
    </citation>
    <scope>NUCLEOTIDE SEQUENCE [MRNA]</scope>
    <scope>DOMAIN</scope>
    <scope>FUNCTION</scope>
    <scope>SUBCELLULAR LOCATION</scope>
</reference>
<evidence type="ECO:0000255" key="1"/>
<evidence type="ECO:0000269" key="2">
    <source>
    </source>
</evidence>
<evidence type="ECO:0000303" key="3">
    <source>
    </source>
</evidence>
<evidence type="ECO:0000305" key="4"/>
<evidence type="ECO:0000305" key="5">
    <source>
    </source>
</evidence>
<accession>P0CV55</accession>
<protein>
    <recommendedName>
        <fullName evidence="3">Secreted RxLR effector protein 134</fullName>
    </recommendedName>
</protein>
<feature type="signal peptide" evidence="1">
    <location>
        <begin position="1"/>
        <end position="19"/>
    </location>
</feature>
<feature type="chain" id="PRO_0000447965" description="Secreted RxLR effector protein 134">
    <location>
        <begin position="20"/>
        <end position="506"/>
    </location>
</feature>
<feature type="short sequence motif" description="RxLR-dEER" evidence="5">
    <location>
        <begin position="50"/>
        <end position="71"/>
    </location>
</feature>
<sequence>MQGAYCVAVALLIAASGQAAANFGLEEPHQAPDSDFMASADTIDEMLQSRVLQVSHYPKDDLMLLAGNEERMLLARSNYLTKIPIPESIMTAANTMRMEGEASAIEAASKNVNQLRSNKRQPVASILNNVARHMSTTPDSDKFLVAVENDRPLVLAKRQRSAAITENGAKFAKQDDYRPVLSGPFTTNDEASNGRHNNQLFTLKALQLDKNENAGNVEDLWQEKKVSNRDLFHLLDEYENSAYLTVVSRLEANAIEAISKNSIRLESNKGKPIAPTPNIKVDQELYAPPDTGKSPVLVSTNIPYILAKRLKNEPPSAIIYNVAGFLAQHDYRPAPSGSSAISADAPNGQLDNQLITQKAFWLDKNKHIDDVESLFKEDTVEHLSHLREGNGESAHFTAVDRQSEPIVWPKDSAVFPQPQKKVVLNEEVNKVHEAFLKAFNLPFHQYLRETVTMLGIARWKRNSSPNSRAAISTLKIFAKNVDPKKLPKLLGTDFAKLQGDKKKHVA</sequence>
<name>RL134_PLAVT</name>
<keyword id="KW-1048">Host nucleus</keyword>
<keyword id="KW-0964">Secreted</keyword>
<keyword id="KW-0732">Signal</keyword>
<keyword id="KW-0843">Virulence</keyword>
<gene>
    <name evidence="3" type="primary">RXLR134</name>
</gene>
<organism>
    <name type="scientific">Plasmopara viticola</name>
    <name type="common">Downy mildew of grapevine</name>
    <name type="synonym">Botrytis viticola</name>
    <dbReference type="NCBI Taxonomy" id="143451"/>
    <lineage>
        <taxon>Eukaryota</taxon>
        <taxon>Sar</taxon>
        <taxon>Stramenopiles</taxon>
        <taxon>Oomycota</taxon>
        <taxon>Peronosporales</taxon>
        <taxon>Peronosporaceae</taxon>
        <taxon>Plasmopara</taxon>
    </lineage>
</organism>
<dbReference type="GO" id="GO:0005576">
    <property type="term" value="C:extracellular region"/>
    <property type="evidence" value="ECO:0007669"/>
    <property type="project" value="UniProtKB-SubCell"/>
</dbReference>
<dbReference type="GO" id="GO:0042025">
    <property type="term" value="C:host cell nucleus"/>
    <property type="evidence" value="ECO:0007669"/>
    <property type="project" value="UniProtKB-SubCell"/>
</dbReference>